<keyword id="KW-0963">Cytoplasm</keyword>
<keyword id="KW-0350">Heme biosynthesis</keyword>
<keyword id="KW-0464">Manganese</keyword>
<keyword id="KW-0479">Metal-binding</keyword>
<keyword id="KW-0560">Oxidoreductase</keyword>
<keyword id="KW-0627">Porphyrin biosynthesis</keyword>
<comment type="function">
    <text evidence="1">Involved in the heme biosynthesis. Catalyzes the aerobic oxidative decarboxylation of propionate groups of rings A and B of coproporphyrinogen-III to yield the vinyl groups in protoporphyrinogen-IX.</text>
</comment>
<comment type="catalytic activity">
    <reaction evidence="1">
        <text>coproporphyrinogen III + O2 + 2 H(+) = protoporphyrinogen IX + 2 CO2 + 2 H2O</text>
        <dbReference type="Rhea" id="RHEA:18257"/>
        <dbReference type="ChEBI" id="CHEBI:15377"/>
        <dbReference type="ChEBI" id="CHEBI:15378"/>
        <dbReference type="ChEBI" id="CHEBI:15379"/>
        <dbReference type="ChEBI" id="CHEBI:16526"/>
        <dbReference type="ChEBI" id="CHEBI:57307"/>
        <dbReference type="ChEBI" id="CHEBI:57309"/>
        <dbReference type="EC" id="1.3.3.3"/>
    </reaction>
</comment>
<comment type="cofactor">
    <cofactor evidence="1">
        <name>Mn(2+)</name>
        <dbReference type="ChEBI" id="CHEBI:29035"/>
    </cofactor>
</comment>
<comment type="pathway">
    <text evidence="1">Porphyrin-containing compound metabolism; protoporphyrin-IX biosynthesis; protoporphyrinogen-IX from coproporphyrinogen-III (O2 route): step 1/1.</text>
</comment>
<comment type="subunit">
    <text evidence="1">Homodimer.</text>
</comment>
<comment type="subcellular location">
    <subcellularLocation>
        <location evidence="1">Cytoplasm</location>
    </subcellularLocation>
</comment>
<comment type="similarity">
    <text evidence="1">Belongs to the aerobic coproporphyrinogen-III oxidase family.</text>
</comment>
<dbReference type="EC" id="1.3.3.3" evidence="1"/>
<dbReference type="EMBL" id="CP000970">
    <property type="protein sequence ID" value="ACB15546.1"/>
    <property type="molecule type" value="Genomic_DNA"/>
</dbReference>
<dbReference type="RefSeq" id="WP_012311582.1">
    <property type="nucleotide sequence ID" value="NC_010498.1"/>
</dbReference>
<dbReference type="SMR" id="B1LMN0"/>
<dbReference type="KEGG" id="ecm:EcSMS35_2591"/>
<dbReference type="HOGENOM" id="CLU_026169_0_1_6"/>
<dbReference type="UniPathway" id="UPA00251">
    <property type="reaction ID" value="UER00322"/>
</dbReference>
<dbReference type="Proteomes" id="UP000007011">
    <property type="component" value="Chromosome"/>
</dbReference>
<dbReference type="GO" id="GO:0005737">
    <property type="term" value="C:cytoplasm"/>
    <property type="evidence" value="ECO:0007669"/>
    <property type="project" value="UniProtKB-SubCell"/>
</dbReference>
<dbReference type="GO" id="GO:0004109">
    <property type="term" value="F:coproporphyrinogen oxidase activity"/>
    <property type="evidence" value="ECO:0007669"/>
    <property type="project" value="UniProtKB-UniRule"/>
</dbReference>
<dbReference type="GO" id="GO:0030145">
    <property type="term" value="F:manganese ion binding"/>
    <property type="evidence" value="ECO:0007669"/>
    <property type="project" value="UniProtKB-UniRule"/>
</dbReference>
<dbReference type="GO" id="GO:0042803">
    <property type="term" value="F:protein homodimerization activity"/>
    <property type="evidence" value="ECO:0000250"/>
    <property type="project" value="UniProtKB"/>
</dbReference>
<dbReference type="GO" id="GO:0006782">
    <property type="term" value="P:protoporphyrinogen IX biosynthetic process"/>
    <property type="evidence" value="ECO:0007669"/>
    <property type="project" value="UniProtKB-UniRule"/>
</dbReference>
<dbReference type="FunFam" id="3.40.1500.10:FF:000001">
    <property type="entry name" value="Oxygen-dependent coproporphyrinogen-III oxidase"/>
    <property type="match status" value="1"/>
</dbReference>
<dbReference type="Gene3D" id="3.40.1500.10">
    <property type="entry name" value="Coproporphyrinogen III oxidase, aerobic"/>
    <property type="match status" value="1"/>
</dbReference>
<dbReference type="HAMAP" id="MF_00333">
    <property type="entry name" value="Coprogen_oxidas"/>
    <property type="match status" value="1"/>
</dbReference>
<dbReference type="InterPro" id="IPR001260">
    <property type="entry name" value="Coprogen_oxidase_aer"/>
</dbReference>
<dbReference type="InterPro" id="IPR036406">
    <property type="entry name" value="Coprogen_oxidase_aer_sf"/>
</dbReference>
<dbReference type="InterPro" id="IPR018375">
    <property type="entry name" value="Coprogen_oxidase_CS"/>
</dbReference>
<dbReference type="NCBIfam" id="NF003727">
    <property type="entry name" value="PRK05330.1"/>
    <property type="match status" value="1"/>
</dbReference>
<dbReference type="PANTHER" id="PTHR10755">
    <property type="entry name" value="COPROPORPHYRINOGEN III OXIDASE, MITOCHONDRIAL"/>
    <property type="match status" value="1"/>
</dbReference>
<dbReference type="PANTHER" id="PTHR10755:SF0">
    <property type="entry name" value="OXYGEN-DEPENDENT COPROPORPHYRINOGEN-III OXIDASE, MITOCHONDRIAL"/>
    <property type="match status" value="1"/>
</dbReference>
<dbReference type="Pfam" id="PF01218">
    <property type="entry name" value="Coprogen_oxidas"/>
    <property type="match status" value="1"/>
</dbReference>
<dbReference type="PIRSF" id="PIRSF000166">
    <property type="entry name" value="Coproporphyri_ox"/>
    <property type="match status" value="1"/>
</dbReference>
<dbReference type="PRINTS" id="PR00073">
    <property type="entry name" value="COPRGNOXDASE"/>
</dbReference>
<dbReference type="SUPFAM" id="SSF102886">
    <property type="entry name" value="Coproporphyrinogen III oxidase"/>
    <property type="match status" value="1"/>
</dbReference>
<dbReference type="PROSITE" id="PS01021">
    <property type="entry name" value="COPROGEN_OXIDASE"/>
    <property type="match status" value="1"/>
</dbReference>
<proteinExistence type="inferred from homology"/>
<sequence length="299" mass="34388">MKPDAHQVKQFLLNLQDTICQQLSAVDGAEFVEDSWLREAGGGGRSRVLRNGGVFEQAGVNFSHVHGEVMPASATAHRPELAGRSFEAMGVSLVVHPHNPYVPTSHANVRFFIAEKPGAEPVWWFGGGFDLTPFYGFEEDAIHWHRTARDLCQPFGEDVYPRYKKWCDEYFYLKHRNEQRGIGGLFFDDLNTPDFDHCFAFMQAVGKGYTNAYLPIVERRKTMAYGERERNFQLYRRGRYVEFNLVWDRGTLFGLQTGGRTESILMSMPPLVRWEYDYQPKDGSPEAALNEFIKVRDWV</sequence>
<feature type="chain" id="PRO_1000119802" description="Oxygen-dependent coproporphyrinogen-III oxidase">
    <location>
        <begin position="1"/>
        <end position="299"/>
    </location>
</feature>
<feature type="region of interest" description="Important for dimerization" evidence="1">
    <location>
        <begin position="240"/>
        <end position="275"/>
    </location>
</feature>
<feature type="active site" description="Proton donor" evidence="1">
    <location>
        <position position="106"/>
    </location>
</feature>
<feature type="binding site" evidence="1">
    <location>
        <position position="92"/>
    </location>
    <ligand>
        <name>substrate</name>
    </ligand>
</feature>
<feature type="binding site" evidence="1">
    <location>
        <position position="96"/>
    </location>
    <ligand>
        <name>Mn(2+)</name>
        <dbReference type="ChEBI" id="CHEBI:29035"/>
    </ligand>
</feature>
<feature type="binding site" evidence="1">
    <location>
        <position position="106"/>
    </location>
    <ligand>
        <name>Mn(2+)</name>
        <dbReference type="ChEBI" id="CHEBI:29035"/>
    </ligand>
</feature>
<feature type="binding site" evidence="1">
    <location>
        <begin position="108"/>
        <end position="110"/>
    </location>
    <ligand>
        <name>substrate</name>
    </ligand>
</feature>
<feature type="binding site" evidence="1">
    <location>
        <position position="145"/>
    </location>
    <ligand>
        <name>Mn(2+)</name>
        <dbReference type="ChEBI" id="CHEBI:29035"/>
    </ligand>
</feature>
<feature type="binding site" evidence="1">
    <location>
        <position position="175"/>
    </location>
    <ligand>
        <name>Mn(2+)</name>
        <dbReference type="ChEBI" id="CHEBI:29035"/>
    </ligand>
</feature>
<feature type="binding site" evidence="1">
    <location>
        <begin position="258"/>
        <end position="260"/>
    </location>
    <ligand>
        <name>substrate</name>
    </ligand>
</feature>
<feature type="site" description="Important for dimerization" evidence="1">
    <location>
        <position position="175"/>
    </location>
</feature>
<reference key="1">
    <citation type="journal article" date="2008" name="J. Bacteriol.">
        <title>Insights into the environmental resistance gene pool from the genome sequence of the multidrug-resistant environmental isolate Escherichia coli SMS-3-5.</title>
        <authorList>
            <person name="Fricke W.F."/>
            <person name="Wright M.S."/>
            <person name="Lindell A.H."/>
            <person name="Harkins D.M."/>
            <person name="Baker-Austin C."/>
            <person name="Ravel J."/>
            <person name="Stepanauskas R."/>
        </authorList>
    </citation>
    <scope>NUCLEOTIDE SEQUENCE [LARGE SCALE GENOMIC DNA]</scope>
    <source>
        <strain>SMS-3-5 / SECEC</strain>
    </source>
</reference>
<organism>
    <name type="scientific">Escherichia coli (strain SMS-3-5 / SECEC)</name>
    <dbReference type="NCBI Taxonomy" id="439855"/>
    <lineage>
        <taxon>Bacteria</taxon>
        <taxon>Pseudomonadati</taxon>
        <taxon>Pseudomonadota</taxon>
        <taxon>Gammaproteobacteria</taxon>
        <taxon>Enterobacterales</taxon>
        <taxon>Enterobacteriaceae</taxon>
        <taxon>Escherichia</taxon>
    </lineage>
</organism>
<gene>
    <name evidence="1" type="primary">hemF</name>
    <name type="ordered locus">EcSMS35_2591</name>
</gene>
<evidence type="ECO:0000255" key="1">
    <source>
        <dbReference type="HAMAP-Rule" id="MF_00333"/>
    </source>
</evidence>
<accession>B1LMN0</accession>
<name>HEM6_ECOSM</name>
<protein>
    <recommendedName>
        <fullName evidence="1">Oxygen-dependent coproporphyrinogen-III oxidase</fullName>
        <shortName evidence="1">CPO</shortName>
        <shortName evidence="1">Coprogen oxidase</shortName>
        <shortName evidence="1">Coproporphyrinogenase</shortName>
        <ecNumber evidence="1">1.3.3.3</ecNumber>
    </recommendedName>
</protein>